<name>YL004_MIMIV</name>
<accession>Q5UP83</accession>
<evidence type="ECO:0000255" key="1">
    <source>
        <dbReference type="PROSITE-ProRule" id="PRU00631"/>
    </source>
</evidence>
<evidence type="ECO:0000256" key="2">
    <source>
        <dbReference type="SAM" id="MobiDB-lite"/>
    </source>
</evidence>
<proteinExistence type="predicted"/>
<feature type="chain" id="PRO_0000247416" description="Putative KilA-N domain-containing protein L4">
    <location>
        <begin position="1"/>
        <end position="454"/>
    </location>
</feature>
<feature type="domain" description="KilA-N" evidence="1">
    <location>
        <begin position="172"/>
        <end position="276"/>
    </location>
</feature>
<feature type="region of interest" description="Disordered" evidence="2">
    <location>
        <begin position="1"/>
        <end position="159"/>
    </location>
</feature>
<feature type="compositionally biased region" description="Basic residues" evidence="2">
    <location>
        <begin position="1"/>
        <end position="12"/>
    </location>
</feature>
<feature type="compositionally biased region" description="Basic and acidic residues" evidence="2">
    <location>
        <begin position="14"/>
        <end position="64"/>
    </location>
</feature>
<feature type="compositionally biased region" description="Basic residues" evidence="2">
    <location>
        <begin position="65"/>
        <end position="79"/>
    </location>
</feature>
<feature type="compositionally biased region" description="Acidic residues" evidence="2">
    <location>
        <begin position="98"/>
        <end position="123"/>
    </location>
</feature>
<feature type="compositionally biased region" description="Acidic residues" evidence="2">
    <location>
        <begin position="130"/>
        <end position="158"/>
    </location>
</feature>
<reference key="1">
    <citation type="journal article" date="2004" name="Science">
        <title>The 1.2-megabase genome sequence of Mimivirus.</title>
        <authorList>
            <person name="Raoult D."/>
            <person name="Audic S."/>
            <person name="Robert C."/>
            <person name="Abergel C."/>
            <person name="Renesto P."/>
            <person name="Ogata H."/>
            <person name="La Scola B."/>
            <person name="Susan M."/>
            <person name="Claverie J.-M."/>
        </authorList>
    </citation>
    <scope>NUCLEOTIDE SEQUENCE [LARGE SCALE GENOMIC DNA]</scope>
    <source>
        <strain>Rowbotham-Bradford</strain>
    </source>
</reference>
<protein>
    <recommendedName>
        <fullName>Putative KilA-N domain-containing protein L4</fullName>
    </recommendedName>
</protein>
<gene>
    <name type="ordered locus">MIMI_L4</name>
</gene>
<sequence length="454" mass="52568">MPQKTSKSKSSRTRYIEDSDDETRGRSRNRSIEKSRSRSLDKSQKKSRDKSLTRSRSKSPEKSKSRSKSLTRSRSKSPKKCITGNRKNSKHTKKDNEYTTEESDEESDDESDGETNEESDEELDNKSDGESDEEISEESDEEISEESDEDVPEEEYDDNDIRNIIIENINNEFARGKFGDFNVIIMKDNGFINATKLCKNAGSDFYHWKETKKAKELINELISSPGIKGDEVISTITGGKLTEIRGTYAHPKLIIQIAAWCSAEYALKVSDIVIEYHAKEAIEQKEKLLKKKDDKIDKLSKKIDEQKKEIKKLLEQGNEVLGYAKDTNRKINHVVNERVPYSDKPEIEHQLIIMKNNDKDKKQYKYSALRVMNKSKSSALSRYYKSHPKGNVILTIKYTPNSMHLWNECKDDLHKKKIKLSKKSSKFNLREDYTEKQLIKDIKKIHNARLQHPN</sequence>
<keyword id="KW-1185">Reference proteome</keyword>
<dbReference type="EMBL" id="AY653733">
    <property type="protein sequence ID" value="AAV50279.1"/>
    <property type="molecule type" value="Genomic_DNA"/>
</dbReference>
<dbReference type="SMR" id="Q5UP83"/>
<dbReference type="KEGG" id="vg:9924573"/>
<dbReference type="OrthoDB" id="28205at10239"/>
<dbReference type="Proteomes" id="UP000001134">
    <property type="component" value="Genome"/>
</dbReference>
<dbReference type="InterPro" id="IPR022549">
    <property type="entry name" value="DUF3627"/>
</dbReference>
<dbReference type="InterPro" id="IPR018004">
    <property type="entry name" value="KilA/APSES_HTH"/>
</dbReference>
<dbReference type="InterPro" id="IPR017880">
    <property type="entry name" value="KilA_N"/>
</dbReference>
<dbReference type="Pfam" id="PF12299">
    <property type="entry name" value="DUF3627"/>
    <property type="match status" value="1"/>
</dbReference>
<dbReference type="Pfam" id="PF04383">
    <property type="entry name" value="KilA-N"/>
    <property type="match status" value="1"/>
</dbReference>
<dbReference type="SMART" id="SM01252">
    <property type="entry name" value="KilA-N"/>
    <property type="match status" value="1"/>
</dbReference>
<dbReference type="PROSITE" id="PS51301">
    <property type="entry name" value="KILA_N"/>
    <property type="match status" value="1"/>
</dbReference>
<organism>
    <name type="scientific">Acanthamoeba polyphaga mimivirus</name>
    <name type="common">APMV</name>
    <dbReference type="NCBI Taxonomy" id="212035"/>
    <lineage>
        <taxon>Viruses</taxon>
        <taxon>Varidnaviria</taxon>
        <taxon>Bamfordvirae</taxon>
        <taxon>Nucleocytoviricota</taxon>
        <taxon>Megaviricetes</taxon>
        <taxon>Imitervirales</taxon>
        <taxon>Mimiviridae</taxon>
        <taxon>Megamimivirinae</taxon>
        <taxon>Mimivirus</taxon>
        <taxon>Mimivirus bradfordmassiliense</taxon>
    </lineage>
</organism>
<organismHost>
    <name type="scientific">Acanthamoeba polyphaga</name>
    <name type="common">Amoeba</name>
    <dbReference type="NCBI Taxonomy" id="5757"/>
</organismHost>